<keyword id="KW-0025">Alternative splicing</keyword>
<keyword id="KW-0963">Cytoplasm</keyword>
<keyword id="KW-0488">Methylation</keyword>
<keyword id="KW-0597">Phosphoprotein</keyword>
<keyword id="KW-1267">Proteomics identification</keyword>
<keyword id="KW-1185">Reference proteome</keyword>
<keyword id="KW-0677">Repeat</keyword>
<keyword id="KW-0833">Ubl conjugation pathway</keyword>
<keyword id="KW-0853">WD repeat</keyword>
<name>TULP4_HUMAN</name>
<feature type="chain" id="PRO_0000186472" description="Tubby-related protein 4">
    <location>
        <begin position="1"/>
        <end position="1543"/>
    </location>
</feature>
<feature type="repeat" description="WD 1">
    <location>
        <begin position="6"/>
        <end position="72"/>
    </location>
</feature>
<feature type="repeat" description="WD 2">
    <location>
        <begin position="73"/>
        <end position="115"/>
    </location>
</feature>
<feature type="repeat" description="WD 3">
    <location>
        <begin position="116"/>
        <end position="158"/>
    </location>
</feature>
<feature type="repeat" description="WD 4">
    <location>
        <begin position="159"/>
        <end position="237"/>
    </location>
</feature>
<feature type="repeat" description="WD 5">
    <location>
        <begin position="238"/>
        <end position="276"/>
    </location>
</feature>
<feature type="repeat" description="WD 6">
    <location>
        <begin position="277"/>
        <end position="334"/>
    </location>
</feature>
<feature type="repeat" description="WD 7">
    <location>
        <begin position="335"/>
        <end position="372"/>
    </location>
</feature>
<feature type="domain" description="SOCS box" evidence="3">
    <location>
        <begin position="364"/>
        <end position="414"/>
    </location>
</feature>
<feature type="region of interest" description="Disordered" evidence="4">
    <location>
        <begin position="530"/>
        <end position="577"/>
    </location>
</feature>
<feature type="region of interest" description="Disordered" evidence="4">
    <location>
        <begin position="829"/>
        <end position="850"/>
    </location>
</feature>
<feature type="region of interest" description="Disordered" evidence="4">
    <location>
        <begin position="1004"/>
        <end position="1058"/>
    </location>
</feature>
<feature type="region of interest" description="Disordered" evidence="4">
    <location>
        <begin position="1326"/>
        <end position="1355"/>
    </location>
</feature>
<feature type="region of interest" description="Disordered" evidence="4">
    <location>
        <begin position="1367"/>
        <end position="1453"/>
    </location>
</feature>
<feature type="region of interest" description="TUB">
    <location>
        <begin position="1466"/>
        <end position="1543"/>
    </location>
</feature>
<feature type="compositionally biased region" description="Polar residues" evidence="4">
    <location>
        <begin position="1036"/>
        <end position="1050"/>
    </location>
</feature>
<feature type="compositionally biased region" description="Basic and acidic residues" evidence="4">
    <location>
        <begin position="1329"/>
        <end position="1347"/>
    </location>
</feature>
<feature type="compositionally biased region" description="Basic and acidic residues" evidence="4">
    <location>
        <begin position="1443"/>
        <end position="1453"/>
    </location>
</feature>
<feature type="modified residue" description="Phosphoserine" evidence="9">
    <location>
        <position position="577"/>
    </location>
</feature>
<feature type="modified residue" description="Asymmetric dimethylarginine" evidence="2">
    <location>
        <position position="945"/>
    </location>
</feature>
<feature type="modified residue" description="Asymmetric dimethylarginine" evidence="2">
    <location>
        <position position="950"/>
    </location>
</feature>
<feature type="modified residue" description="Phosphoserine" evidence="9">
    <location>
        <position position="1343"/>
    </location>
</feature>
<feature type="modified residue" description="Phosphoserine" evidence="9">
    <location>
        <position position="1374"/>
    </location>
</feature>
<feature type="splice variant" id="VSP_006676" description="In isoform 2." evidence="5 6 7">
    <original>VTGASGV</original>
    <variation>GDAVWTD</variation>
    <location>
        <begin position="672"/>
        <end position="678"/>
    </location>
</feature>
<feature type="splice variant" id="VSP_006677" description="In isoform 2." evidence="5 6 7">
    <location>
        <begin position="679"/>
        <end position="1543"/>
    </location>
</feature>
<feature type="sequence variant" id="VAR_059841" description="In dbSNP:rs705956.">
    <original>R</original>
    <variation>S</variation>
    <location>
        <position position="199"/>
    </location>
</feature>
<feature type="sequence variant" id="VAR_052417" description="In dbSNP:rs35262826.">
    <original>G</original>
    <variation>S</variation>
    <location>
        <position position="214"/>
    </location>
</feature>
<feature type="sequence variant" id="VAR_052418" description="In dbSNP:rs12206717.">
    <original>S</original>
    <variation>N</variation>
    <location>
        <position position="522"/>
    </location>
</feature>
<feature type="sequence variant" id="VAR_052419" description="In dbSNP:rs34622886.">
    <original>D</original>
    <variation>N</variation>
    <location>
        <position position="979"/>
    </location>
</feature>
<feature type="sequence variant" id="VAR_052420" description="In dbSNP:rs34559793.">
    <original>V</original>
    <variation>I</variation>
    <location>
        <position position="1084"/>
    </location>
</feature>
<feature type="sequence variant" id="VAR_052421" description="In dbSNP:rs3749852.">
    <original>P</original>
    <variation>T</variation>
    <location>
        <position position="1281"/>
    </location>
</feature>
<feature type="sequence conflict" description="In Ref. 1; AAF87975." evidence="8" ref="1">
    <original>P</original>
    <variation>Q</variation>
    <location>
        <position position="745"/>
    </location>
</feature>
<accession>Q9NRJ4</accession>
<accession>Q5T3M2</accession>
<accession>Q5T3M3</accession>
<accession>Q9HD22</accession>
<accession>Q9P2F0</accession>
<protein>
    <recommendedName>
        <fullName>Tubby-related protein 4</fullName>
    </recommendedName>
    <alternativeName>
        <fullName>Tubby superfamily protein</fullName>
    </alternativeName>
    <alternativeName>
        <fullName>Tubby-like protein 4</fullName>
    </alternativeName>
</protein>
<dbReference type="EMBL" id="AF219946">
    <property type="protein sequence ID" value="AAF87975.1"/>
    <property type="status" value="ALT_FRAME"/>
    <property type="molecule type" value="mRNA"/>
</dbReference>
<dbReference type="EMBL" id="AF288480">
    <property type="protein sequence ID" value="AAG01020.1"/>
    <property type="molecule type" value="mRNA"/>
</dbReference>
<dbReference type="EMBL" id="AB037818">
    <property type="protein sequence ID" value="BAA92635.1"/>
    <property type="status" value="ALT_INIT"/>
    <property type="molecule type" value="mRNA"/>
</dbReference>
<dbReference type="EMBL" id="AL360169">
    <property type="status" value="NOT_ANNOTATED_CDS"/>
    <property type="molecule type" value="Genomic_DNA"/>
</dbReference>
<dbReference type="EMBL" id="AL353800">
    <property type="status" value="NOT_ANNOTATED_CDS"/>
    <property type="molecule type" value="Genomic_DNA"/>
</dbReference>
<dbReference type="EMBL" id="CH471051">
    <property type="protein sequence ID" value="EAW47661.1"/>
    <property type="molecule type" value="Genomic_DNA"/>
</dbReference>
<dbReference type="EMBL" id="CH471051">
    <property type="protein sequence ID" value="EAW47662.1"/>
    <property type="molecule type" value="Genomic_DNA"/>
</dbReference>
<dbReference type="EMBL" id="BC152476">
    <property type="protein sequence ID" value="AAI52477.1"/>
    <property type="molecule type" value="mRNA"/>
</dbReference>
<dbReference type="CCDS" id="CCDS34561.1">
    <molecule id="Q9NRJ4-1"/>
</dbReference>
<dbReference type="CCDS" id="CCDS34562.1">
    <molecule id="Q9NRJ4-2"/>
</dbReference>
<dbReference type="RefSeq" id="NP_001007467.1">
    <molecule id="Q9NRJ4-2"/>
    <property type="nucleotide sequence ID" value="NM_001007466.3"/>
</dbReference>
<dbReference type="RefSeq" id="NP_064630.2">
    <molecule id="Q9NRJ4-1"/>
    <property type="nucleotide sequence ID" value="NM_020245.5"/>
</dbReference>
<dbReference type="RefSeq" id="XP_016866558.1">
    <property type="nucleotide sequence ID" value="XM_017011069.1"/>
</dbReference>
<dbReference type="RefSeq" id="XP_016866559.1">
    <molecule id="Q9NRJ4-1"/>
    <property type="nucleotide sequence ID" value="XM_017011070.2"/>
</dbReference>
<dbReference type="RefSeq" id="XP_016866560.1">
    <property type="nucleotide sequence ID" value="XM_017011071.1"/>
</dbReference>
<dbReference type="RefSeq" id="XP_047275039.1">
    <molecule id="Q9NRJ4-1"/>
    <property type="nucleotide sequence ID" value="XM_047419083.1"/>
</dbReference>
<dbReference type="RefSeq" id="XP_047275040.1">
    <molecule id="Q9NRJ4-1"/>
    <property type="nucleotide sequence ID" value="XM_047419084.1"/>
</dbReference>
<dbReference type="RefSeq" id="XP_047275041.1">
    <molecule id="Q9NRJ4-1"/>
    <property type="nucleotide sequence ID" value="XM_047419085.1"/>
</dbReference>
<dbReference type="RefSeq" id="XP_047275042.1">
    <molecule id="Q9NRJ4-1"/>
    <property type="nucleotide sequence ID" value="XM_047419086.1"/>
</dbReference>
<dbReference type="RefSeq" id="XP_047275043.1">
    <molecule id="Q9NRJ4-1"/>
    <property type="nucleotide sequence ID" value="XM_047419087.1"/>
</dbReference>
<dbReference type="RefSeq" id="XP_047275044.1">
    <molecule id="Q9NRJ4-2"/>
    <property type="nucleotide sequence ID" value="XM_047419088.1"/>
</dbReference>
<dbReference type="RefSeq" id="XP_047275045.1">
    <molecule id="Q9NRJ4-2"/>
    <property type="nucleotide sequence ID" value="XM_047419089.1"/>
</dbReference>
<dbReference type="RefSeq" id="XP_054211922.1">
    <molecule id="Q9NRJ4-1"/>
    <property type="nucleotide sequence ID" value="XM_054355947.1"/>
</dbReference>
<dbReference type="RefSeq" id="XP_054211923.1">
    <molecule id="Q9NRJ4-1"/>
    <property type="nucleotide sequence ID" value="XM_054355948.1"/>
</dbReference>
<dbReference type="RefSeq" id="XP_054211924.1">
    <molecule id="Q9NRJ4-1"/>
    <property type="nucleotide sequence ID" value="XM_054355949.1"/>
</dbReference>
<dbReference type="RefSeq" id="XP_054211925.1">
    <molecule id="Q9NRJ4-1"/>
    <property type="nucleotide sequence ID" value="XM_054355950.1"/>
</dbReference>
<dbReference type="RefSeq" id="XP_054211926.1">
    <molecule id="Q9NRJ4-1"/>
    <property type="nucleotide sequence ID" value="XM_054355951.1"/>
</dbReference>
<dbReference type="RefSeq" id="XP_054211927.1">
    <molecule id="Q9NRJ4-1"/>
    <property type="nucleotide sequence ID" value="XM_054355952.1"/>
</dbReference>
<dbReference type="RefSeq" id="XP_054211928.1">
    <molecule id="Q9NRJ4-1"/>
    <property type="nucleotide sequence ID" value="XM_054355953.1"/>
</dbReference>
<dbReference type="RefSeq" id="XP_054211930.1">
    <molecule id="Q9NRJ4-2"/>
    <property type="nucleotide sequence ID" value="XM_054355955.1"/>
</dbReference>
<dbReference type="RefSeq" id="XP_054211931.1">
    <molecule id="Q9NRJ4-2"/>
    <property type="nucleotide sequence ID" value="XM_054355956.1"/>
</dbReference>
<dbReference type="SMR" id="Q9NRJ4"/>
<dbReference type="BioGRID" id="121310">
    <property type="interactions" value="21"/>
</dbReference>
<dbReference type="FunCoup" id="Q9NRJ4">
    <property type="interactions" value="2280"/>
</dbReference>
<dbReference type="IntAct" id="Q9NRJ4">
    <property type="interactions" value="16"/>
</dbReference>
<dbReference type="STRING" id="9606.ENSP00000356064"/>
<dbReference type="GlyCosmos" id="Q9NRJ4">
    <property type="glycosylation" value="1 site, 1 glycan"/>
</dbReference>
<dbReference type="GlyGen" id="Q9NRJ4">
    <property type="glycosylation" value="2 sites, 1 O-linked glycan (2 sites)"/>
</dbReference>
<dbReference type="iPTMnet" id="Q9NRJ4"/>
<dbReference type="PhosphoSitePlus" id="Q9NRJ4"/>
<dbReference type="BioMuta" id="TULP4"/>
<dbReference type="DMDM" id="212276475"/>
<dbReference type="jPOST" id="Q9NRJ4"/>
<dbReference type="MassIVE" id="Q9NRJ4"/>
<dbReference type="PaxDb" id="9606-ENSP00000356064"/>
<dbReference type="PeptideAtlas" id="Q9NRJ4"/>
<dbReference type="ProteomicsDB" id="82378">
    <molecule id="Q9NRJ4-1"/>
</dbReference>
<dbReference type="ProteomicsDB" id="82379">
    <molecule id="Q9NRJ4-2"/>
</dbReference>
<dbReference type="Antibodypedia" id="1688">
    <property type="antibodies" value="61 antibodies from 19 providers"/>
</dbReference>
<dbReference type="DNASU" id="56995"/>
<dbReference type="Ensembl" id="ENST00000367094.6">
    <molecule id="Q9NRJ4-2"/>
    <property type="protein sequence ID" value="ENSP00000356061.2"/>
    <property type="gene ID" value="ENSG00000130338.13"/>
</dbReference>
<dbReference type="Ensembl" id="ENST00000367097.8">
    <molecule id="Q9NRJ4-1"/>
    <property type="protein sequence ID" value="ENSP00000356064.3"/>
    <property type="gene ID" value="ENSG00000130338.13"/>
</dbReference>
<dbReference type="GeneID" id="56995"/>
<dbReference type="KEGG" id="hsa:56995"/>
<dbReference type="MANE-Select" id="ENST00000367097.8">
    <property type="protein sequence ID" value="ENSP00000356064.3"/>
    <property type="RefSeq nucleotide sequence ID" value="NM_020245.5"/>
    <property type="RefSeq protein sequence ID" value="NP_064630.2"/>
</dbReference>
<dbReference type="UCSC" id="uc003qrf.4">
    <molecule id="Q9NRJ4-1"/>
    <property type="organism name" value="human"/>
</dbReference>
<dbReference type="AGR" id="HGNC:15530"/>
<dbReference type="CTD" id="56995"/>
<dbReference type="DisGeNET" id="56995"/>
<dbReference type="GeneCards" id="TULP4"/>
<dbReference type="HGNC" id="HGNC:15530">
    <property type="gene designation" value="TULP4"/>
</dbReference>
<dbReference type="HPA" id="ENSG00000130338">
    <property type="expression patterns" value="Low tissue specificity"/>
</dbReference>
<dbReference type="MIM" id="619442">
    <property type="type" value="gene"/>
</dbReference>
<dbReference type="neXtProt" id="NX_Q9NRJ4"/>
<dbReference type="OpenTargets" id="ENSG00000130338"/>
<dbReference type="PharmGKB" id="PA134880863"/>
<dbReference type="VEuPathDB" id="HostDB:ENSG00000130338"/>
<dbReference type="eggNOG" id="KOG2503">
    <property type="taxonomic scope" value="Eukaryota"/>
</dbReference>
<dbReference type="GeneTree" id="ENSGT00940000155913"/>
<dbReference type="HOGENOM" id="CLU_002083_1_0_1"/>
<dbReference type="InParanoid" id="Q9NRJ4"/>
<dbReference type="OMA" id="DARVKCM"/>
<dbReference type="OrthoDB" id="8775810at2759"/>
<dbReference type="PAN-GO" id="Q9NRJ4">
    <property type="GO annotations" value="0 GO annotations based on evolutionary models"/>
</dbReference>
<dbReference type="PhylomeDB" id="Q9NRJ4"/>
<dbReference type="TreeFam" id="TF314076"/>
<dbReference type="PathwayCommons" id="Q9NRJ4"/>
<dbReference type="Reactome" id="R-HSA-8951664">
    <property type="pathway name" value="Neddylation"/>
</dbReference>
<dbReference type="SignaLink" id="Q9NRJ4"/>
<dbReference type="UniPathway" id="UPA00143"/>
<dbReference type="BioGRID-ORCS" id="56995">
    <property type="hits" value="15 hits in 1210 CRISPR screens"/>
</dbReference>
<dbReference type="ChiTaRS" id="TULP4">
    <property type="organism name" value="human"/>
</dbReference>
<dbReference type="GenomeRNAi" id="56995"/>
<dbReference type="Pharos" id="Q9NRJ4">
    <property type="development level" value="Tbio"/>
</dbReference>
<dbReference type="PRO" id="PR:Q9NRJ4"/>
<dbReference type="Proteomes" id="UP000005640">
    <property type="component" value="Chromosome 6"/>
</dbReference>
<dbReference type="RNAct" id="Q9NRJ4">
    <property type="molecule type" value="protein"/>
</dbReference>
<dbReference type="Bgee" id="ENSG00000130338">
    <property type="expression patterns" value="Expressed in medial globus pallidus and 202 other cell types or tissues"/>
</dbReference>
<dbReference type="ExpressionAtlas" id="Q9NRJ4">
    <property type="expression patterns" value="baseline and differential"/>
</dbReference>
<dbReference type="GO" id="GO:0005737">
    <property type="term" value="C:cytoplasm"/>
    <property type="evidence" value="ECO:0000314"/>
    <property type="project" value="MGI"/>
</dbReference>
<dbReference type="GO" id="GO:0005829">
    <property type="term" value="C:cytosol"/>
    <property type="evidence" value="ECO:0000304"/>
    <property type="project" value="Reactome"/>
</dbReference>
<dbReference type="GO" id="GO:0016567">
    <property type="term" value="P:protein ubiquitination"/>
    <property type="evidence" value="ECO:0007669"/>
    <property type="project" value="UniProtKB-UniPathway"/>
</dbReference>
<dbReference type="FunFam" id="2.130.10.10:FF:000262">
    <property type="entry name" value="Tubby like protein 4"/>
    <property type="match status" value="1"/>
</dbReference>
<dbReference type="FunFam" id="3.20.90.10:FF:000002">
    <property type="entry name" value="Tubby like protein 4"/>
    <property type="match status" value="1"/>
</dbReference>
<dbReference type="Gene3D" id="3.20.90.10">
    <property type="entry name" value="Tubby Protein, Chain A"/>
    <property type="match status" value="1"/>
</dbReference>
<dbReference type="Gene3D" id="2.130.10.10">
    <property type="entry name" value="YVTN repeat-like/Quinoprotein amine dehydrogenase"/>
    <property type="match status" value="1"/>
</dbReference>
<dbReference type="InterPro" id="IPR056159">
    <property type="entry name" value="Beta-prop_WDR35_TULP_N"/>
</dbReference>
<dbReference type="InterPro" id="IPR001496">
    <property type="entry name" value="SOCS_box"/>
</dbReference>
<dbReference type="InterPro" id="IPR025659">
    <property type="entry name" value="Tubby-like_C"/>
</dbReference>
<dbReference type="InterPro" id="IPR000007">
    <property type="entry name" value="Tubby_C"/>
</dbReference>
<dbReference type="InterPro" id="IPR008983">
    <property type="entry name" value="Tumour_necrosis_fac-like_dom"/>
</dbReference>
<dbReference type="InterPro" id="IPR015943">
    <property type="entry name" value="WD40/YVTN_repeat-like_dom_sf"/>
</dbReference>
<dbReference type="InterPro" id="IPR036322">
    <property type="entry name" value="WD40_repeat_dom_sf"/>
</dbReference>
<dbReference type="InterPro" id="IPR001680">
    <property type="entry name" value="WD40_rpt"/>
</dbReference>
<dbReference type="PANTHER" id="PTHR16517">
    <property type="entry name" value="TUBBY-RELATED"/>
    <property type="match status" value="1"/>
</dbReference>
<dbReference type="PANTHER" id="PTHR16517:SF2">
    <property type="entry name" value="TUBBY-RELATED PROTEIN 4"/>
    <property type="match status" value="1"/>
</dbReference>
<dbReference type="Pfam" id="PF24797">
    <property type="entry name" value="Beta-prop_WDR35_TULP_N"/>
    <property type="match status" value="1"/>
</dbReference>
<dbReference type="Pfam" id="PF07525">
    <property type="entry name" value="SOCS_box"/>
    <property type="match status" value="1"/>
</dbReference>
<dbReference type="Pfam" id="PF01167">
    <property type="entry name" value="Tub"/>
    <property type="match status" value="1"/>
</dbReference>
<dbReference type="SMART" id="SM00969">
    <property type="entry name" value="SOCS_box"/>
    <property type="match status" value="1"/>
</dbReference>
<dbReference type="SMART" id="SM00320">
    <property type="entry name" value="WD40"/>
    <property type="match status" value="2"/>
</dbReference>
<dbReference type="SUPFAM" id="SSF49842">
    <property type="entry name" value="TNF-like"/>
    <property type="match status" value="1"/>
</dbReference>
<dbReference type="SUPFAM" id="SSF54518">
    <property type="entry name" value="Tubby C-terminal domain-like"/>
    <property type="match status" value="1"/>
</dbReference>
<dbReference type="SUPFAM" id="SSF50978">
    <property type="entry name" value="WD40 repeat-like"/>
    <property type="match status" value="1"/>
</dbReference>
<dbReference type="PROSITE" id="PS50225">
    <property type="entry name" value="SOCS"/>
    <property type="match status" value="1"/>
</dbReference>
<dbReference type="PROSITE" id="PS50082">
    <property type="entry name" value="WD_REPEATS_2"/>
    <property type="match status" value="1"/>
</dbReference>
<dbReference type="PROSITE" id="PS50294">
    <property type="entry name" value="WD_REPEATS_REGION"/>
    <property type="match status" value="1"/>
</dbReference>
<evidence type="ECO:0000250" key="1"/>
<evidence type="ECO:0000250" key="2">
    <source>
        <dbReference type="UniProtKB" id="Q9JIL5"/>
    </source>
</evidence>
<evidence type="ECO:0000255" key="3">
    <source>
        <dbReference type="PROSITE-ProRule" id="PRU00194"/>
    </source>
</evidence>
<evidence type="ECO:0000256" key="4">
    <source>
        <dbReference type="SAM" id="MobiDB-lite"/>
    </source>
</evidence>
<evidence type="ECO:0000303" key="5">
    <source>
    </source>
</evidence>
<evidence type="ECO:0000303" key="6">
    <source>
    </source>
</evidence>
<evidence type="ECO:0000303" key="7">
    <source>
    </source>
</evidence>
<evidence type="ECO:0000305" key="8"/>
<evidence type="ECO:0007744" key="9">
    <source>
    </source>
</evidence>
<sequence length="1543" mass="169000">MYAAVEHGPVLCSDSNILCLSWKGRVPKSEKEKPVCRRRYYEEGWLATGNGRGVVGVTFTSSHCRRDRSTPQRINFNLRGHNSEVVLVRWNEPYQKLATCDADGGIFVWIQYEGRWSVELVNDRGAQVSDFTWSHDGTQALISYRDGFVLVGSVSGQRHWSSEINLESQITCGIWTPDDQQVLFGTADGQVIVMDCHGRMLAHVLLHESDGVLGMSWNYPIFLVEDSSESDTDSDDYAPPQDGPAAYPIPVQNIKPLLTVSFTSGDISLMNNYDDLSPTVIRSGLKEVVAQWCTQGDLLAVAGMERQTQLGELPNGPLLKSAMVKFYNVRGEHIFTLDTLVQRPIISICWGHRDSRLLMASGPALYVVRVEHRVSSLQLLCQQAIASTLREDKDVSKLTLPPRLCSYLSTAFIPTIKPPIPDPNNMRDFVSYPSAGNERLHCTMKRTEDDPEVGGPCYTLYLEYLGGLVPILKGRRISKLRPEFVIMDPRTDSKPDEIYGNSLISTVIDSCNCSDSSDIELSDDWAAKKSPKISRASKSPKLPRISIEARKSPKLPRAAQELSRSPRLPLRKPSVGSPSLTRREFPFEDITQHNYLAQVTSNIWGTKFKIVGLAAFLPTNLGAVIYKTSLLHLQPRQMTIYLPEVRKISMDYINLPVFNPNVFSEDEDDLPVTGASGVPENSPPCTVNIPIAPIHSSAQAMSPTQSIGLVQSLLANQNVQLDVLTNQTTAVGTAEHAGDSATQYPVSNRYSNPGQVIFGSVEMGRIIQNPPPLSLPPPPQGPMQLSTVGHGDRDHEHLQKSAKALRPTPQLAAEGDAVVFSAPQEVQVTKINPPPPYPGTIPAAPTTAAPPPPLPPPQPPVDVCLKKGDFSLYPTSVHYQTPLGYERITTFDSSGNVEEVCRPRTRMLCSQNTYTLPGPGSSATLRLTATEKKVPQPCSSATLNRLTVPRYSIPTGDPPPYPEIASQLAQGRGAAQRSDNSLIHATLRRNNREATLKMAQLADSPRAPLQPLAKSKGGPGGVVTQLPARPPPALYTCSQCSGTGPSSQPGASLAHTASASPLASQSSYSLLSPPDSARDRTDYVNSAFTEDEALSQHCQLEKPLRHPPLPEAAVTLKRPPPYQWDPMLGEDVWVPQERTAQTSGPNPLKLSSLMLSQGQHLDVSRLPFISPKSPASPTATFQTGYGMGVPYPGSYNNPPLPGVQAPCSPKDALSPTQFAQQEPAVVLQPLYPPSLSYCTLPPMYPGSSTCSSLQLPPVALHPWSSYSACPPMQNPQGTLPPKPHLVVEKPLVSPPPADLQSHLGTEVMVETADNFQEVLSLTESPVPQRTEKFGKKNRKRLDSRAEEGSVQAITEGKVKKEARTLSDFNSLISSPHLGREKKKVKSQKDQLKSKKLNKTNEFQDSSESEPELFISGDELMNQSQGSRKGWKSKRSPRAAGELEEAKCRRASEKEDGRLGSQGFVYVMANKQPLWNEATQVYQLDFGGRVTQESAKNFQIELEGRQVMQFGRIDGSAYILDFQYPFSAVQAFAVALANVTQRLK</sequence>
<organism>
    <name type="scientific">Homo sapiens</name>
    <name type="common">Human</name>
    <dbReference type="NCBI Taxonomy" id="9606"/>
    <lineage>
        <taxon>Eukaryota</taxon>
        <taxon>Metazoa</taxon>
        <taxon>Chordata</taxon>
        <taxon>Craniata</taxon>
        <taxon>Vertebrata</taxon>
        <taxon>Euteleostomi</taxon>
        <taxon>Mammalia</taxon>
        <taxon>Eutheria</taxon>
        <taxon>Euarchontoglires</taxon>
        <taxon>Primates</taxon>
        <taxon>Haplorrhini</taxon>
        <taxon>Catarrhini</taxon>
        <taxon>Hominidae</taxon>
        <taxon>Homo</taxon>
    </lineage>
</organism>
<proteinExistence type="evidence at protein level"/>
<comment type="function">
    <text evidence="1">May be a substrate-recognition component of a SCF-like ECS (Elongin-Cullin-SOCS-box protein) E3 ubiquitin ligase complex which mediates the ubiquitination and subsequent proteasomal degradation of target proteins.</text>
</comment>
<comment type="pathway">
    <text>Protein modification; protein ubiquitination.</text>
</comment>
<comment type="subcellular location">
    <subcellularLocation>
        <location>Cytoplasm</location>
    </subcellularLocation>
</comment>
<comment type="alternative products">
    <event type="alternative splicing"/>
    <isoform>
        <id>Q9NRJ4-1</id>
        <name>1</name>
        <sequence type="displayed"/>
    </isoform>
    <isoform>
        <id>Q9NRJ4-2</id>
        <name>2</name>
        <sequence type="described" ref="VSP_006676 VSP_006677"/>
    </isoform>
</comment>
<comment type="tissue specificity">
    <text>Expressed mainly in the brain, skeletal muscle, testis and kidney.</text>
</comment>
<comment type="domain">
    <text evidence="1">The SOCS box domain mediates the interaction with the Elongin BC complex, an adapter module in different E3 ubiquitin ligase complexes.</text>
</comment>
<comment type="similarity">
    <text evidence="8">Belongs to the TUB family.</text>
</comment>
<comment type="sequence caution" evidence="8">
    <conflict type="frameshift">
        <sequence resource="EMBL-CDS" id="AAF87975"/>
    </conflict>
</comment>
<comment type="sequence caution" evidence="8">
    <conflict type="erroneous initiation">
        <sequence resource="EMBL-CDS" id="BAA92635"/>
    </conflict>
</comment>
<gene>
    <name type="primary">TULP4</name>
    <name type="synonym">KIAA1397</name>
    <name type="synonym">TUBL4</name>
    <name type="synonym">TUSP</name>
</gene>
<reference key="1">
    <citation type="journal article" date="2001" name="Gene">
        <title>Molecular cloning and characterization of the mouse and human TUSP gene, a novel member of the tubby superfamily.</title>
        <authorList>
            <person name="Li Q.-Z."/>
            <person name="Wang C.-Y."/>
            <person name="Shi J.-D."/>
            <person name="Ruan Q.-G."/>
            <person name="Eckenrode S."/>
            <person name="Davoodi-Semiromi A."/>
            <person name="Kukar T."/>
            <person name="Gu Y."/>
            <person name="Lian W."/>
            <person name="Wu D."/>
            <person name="She J.-X."/>
        </authorList>
    </citation>
    <scope>NUCLEOTIDE SEQUENCE [MRNA] (ISOFORMS 1 AND 2)</scope>
    <scope>ALTERNATIVE SPLICING</scope>
    <source>
        <tissue>Brain</tissue>
    </source>
</reference>
<reference key="2">
    <citation type="journal article" date="2000" name="DNA Res.">
        <title>Prediction of the coding sequences of unidentified human genes. XVI. The complete sequences of 150 new cDNA clones from brain which code for large proteins in vitro.</title>
        <authorList>
            <person name="Nagase T."/>
            <person name="Kikuno R."/>
            <person name="Ishikawa K."/>
            <person name="Hirosawa M."/>
            <person name="Ohara O."/>
        </authorList>
    </citation>
    <scope>NUCLEOTIDE SEQUENCE [LARGE SCALE MRNA] (ISOFORM 2)</scope>
    <source>
        <tissue>Brain</tissue>
    </source>
</reference>
<reference key="3">
    <citation type="journal article" date="2003" name="Nature">
        <title>The DNA sequence and analysis of human chromosome 6.</title>
        <authorList>
            <person name="Mungall A.J."/>
            <person name="Palmer S.A."/>
            <person name="Sims S.K."/>
            <person name="Edwards C.A."/>
            <person name="Ashurst J.L."/>
            <person name="Wilming L."/>
            <person name="Jones M.C."/>
            <person name="Horton R."/>
            <person name="Hunt S.E."/>
            <person name="Scott C.E."/>
            <person name="Gilbert J.G.R."/>
            <person name="Clamp M.E."/>
            <person name="Bethel G."/>
            <person name="Milne S."/>
            <person name="Ainscough R."/>
            <person name="Almeida J.P."/>
            <person name="Ambrose K.D."/>
            <person name="Andrews T.D."/>
            <person name="Ashwell R.I.S."/>
            <person name="Babbage A.K."/>
            <person name="Bagguley C.L."/>
            <person name="Bailey J."/>
            <person name="Banerjee R."/>
            <person name="Barker D.J."/>
            <person name="Barlow K.F."/>
            <person name="Bates K."/>
            <person name="Beare D.M."/>
            <person name="Beasley H."/>
            <person name="Beasley O."/>
            <person name="Bird C.P."/>
            <person name="Blakey S.E."/>
            <person name="Bray-Allen S."/>
            <person name="Brook J."/>
            <person name="Brown A.J."/>
            <person name="Brown J.Y."/>
            <person name="Burford D.C."/>
            <person name="Burrill W."/>
            <person name="Burton J."/>
            <person name="Carder C."/>
            <person name="Carter N.P."/>
            <person name="Chapman J.C."/>
            <person name="Clark S.Y."/>
            <person name="Clark G."/>
            <person name="Clee C.M."/>
            <person name="Clegg S."/>
            <person name="Cobley V."/>
            <person name="Collier R.E."/>
            <person name="Collins J.E."/>
            <person name="Colman L.K."/>
            <person name="Corby N.R."/>
            <person name="Coville G.J."/>
            <person name="Culley K.M."/>
            <person name="Dhami P."/>
            <person name="Davies J."/>
            <person name="Dunn M."/>
            <person name="Earthrowl M.E."/>
            <person name="Ellington A.E."/>
            <person name="Evans K.A."/>
            <person name="Faulkner L."/>
            <person name="Francis M.D."/>
            <person name="Frankish A."/>
            <person name="Frankland J."/>
            <person name="French L."/>
            <person name="Garner P."/>
            <person name="Garnett J."/>
            <person name="Ghori M.J."/>
            <person name="Gilby L.M."/>
            <person name="Gillson C.J."/>
            <person name="Glithero R.J."/>
            <person name="Grafham D.V."/>
            <person name="Grant M."/>
            <person name="Gribble S."/>
            <person name="Griffiths C."/>
            <person name="Griffiths M.N.D."/>
            <person name="Hall R."/>
            <person name="Halls K.S."/>
            <person name="Hammond S."/>
            <person name="Harley J.L."/>
            <person name="Hart E.A."/>
            <person name="Heath P.D."/>
            <person name="Heathcott R."/>
            <person name="Holmes S.J."/>
            <person name="Howden P.J."/>
            <person name="Howe K.L."/>
            <person name="Howell G.R."/>
            <person name="Huckle E."/>
            <person name="Humphray S.J."/>
            <person name="Humphries M.D."/>
            <person name="Hunt A.R."/>
            <person name="Johnson C.M."/>
            <person name="Joy A.A."/>
            <person name="Kay M."/>
            <person name="Keenan S.J."/>
            <person name="Kimberley A.M."/>
            <person name="King A."/>
            <person name="Laird G.K."/>
            <person name="Langford C."/>
            <person name="Lawlor S."/>
            <person name="Leongamornlert D.A."/>
            <person name="Leversha M."/>
            <person name="Lloyd C.R."/>
            <person name="Lloyd D.M."/>
            <person name="Loveland J.E."/>
            <person name="Lovell J."/>
            <person name="Martin S."/>
            <person name="Mashreghi-Mohammadi M."/>
            <person name="Maslen G.L."/>
            <person name="Matthews L."/>
            <person name="McCann O.T."/>
            <person name="McLaren S.J."/>
            <person name="McLay K."/>
            <person name="McMurray A."/>
            <person name="Moore M.J.F."/>
            <person name="Mullikin J.C."/>
            <person name="Niblett D."/>
            <person name="Nickerson T."/>
            <person name="Novik K.L."/>
            <person name="Oliver K."/>
            <person name="Overton-Larty E.K."/>
            <person name="Parker A."/>
            <person name="Patel R."/>
            <person name="Pearce A.V."/>
            <person name="Peck A.I."/>
            <person name="Phillimore B.J.C.T."/>
            <person name="Phillips S."/>
            <person name="Plumb R.W."/>
            <person name="Porter K.M."/>
            <person name="Ramsey Y."/>
            <person name="Ranby S.A."/>
            <person name="Rice C.M."/>
            <person name="Ross M.T."/>
            <person name="Searle S.M."/>
            <person name="Sehra H.K."/>
            <person name="Sheridan E."/>
            <person name="Skuce C.D."/>
            <person name="Smith S."/>
            <person name="Smith M."/>
            <person name="Spraggon L."/>
            <person name="Squares S.L."/>
            <person name="Steward C.A."/>
            <person name="Sycamore N."/>
            <person name="Tamlyn-Hall G."/>
            <person name="Tester J."/>
            <person name="Theaker A.J."/>
            <person name="Thomas D.W."/>
            <person name="Thorpe A."/>
            <person name="Tracey A."/>
            <person name="Tromans A."/>
            <person name="Tubby B."/>
            <person name="Wall M."/>
            <person name="Wallis J.M."/>
            <person name="West A.P."/>
            <person name="White S.S."/>
            <person name="Whitehead S.L."/>
            <person name="Whittaker H."/>
            <person name="Wild A."/>
            <person name="Willey D.J."/>
            <person name="Wilmer T.E."/>
            <person name="Wood J.M."/>
            <person name="Wray P.W."/>
            <person name="Wyatt J.C."/>
            <person name="Young L."/>
            <person name="Younger R.M."/>
            <person name="Bentley D.R."/>
            <person name="Coulson A."/>
            <person name="Durbin R.M."/>
            <person name="Hubbard T."/>
            <person name="Sulston J.E."/>
            <person name="Dunham I."/>
            <person name="Rogers J."/>
            <person name="Beck S."/>
        </authorList>
    </citation>
    <scope>NUCLEOTIDE SEQUENCE [LARGE SCALE GENOMIC DNA]</scope>
</reference>
<reference key="4">
    <citation type="submission" date="2005-09" db="EMBL/GenBank/DDBJ databases">
        <authorList>
            <person name="Mural R.J."/>
            <person name="Istrail S."/>
            <person name="Sutton G.G."/>
            <person name="Florea L."/>
            <person name="Halpern A.L."/>
            <person name="Mobarry C.M."/>
            <person name="Lippert R."/>
            <person name="Walenz B."/>
            <person name="Shatkay H."/>
            <person name="Dew I."/>
            <person name="Miller J.R."/>
            <person name="Flanigan M.J."/>
            <person name="Edwards N.J."/>
            <person name="Bolanos R."/>
            <person name="Fasulo D."/>
            <person name="Halldorsson B.V."/>
            <person name="Hannenhalli S."/>
            <person name="Turner R."/>
            <person name="Yooseph S."/>
            <person name="Lu F."/>
            <person name="Nusskern D.R."/>
            <person name="Shue B.C."/>
            <person name="Zheng X.H."/>
            <person name="Zhong F."/>
            <person name="Delcher A.L."/>
            <person name="Huson D.H."/>
            <person name="Kravitz S.A."/>
            <person name="Mouchard L."/>
            <person name="Reinert K."/>
            <person name="Remington K.A."/>
            <person name="Clark A.G."/>
            <person name="Waterman M.S."/>
            <person name="Eichler E.E."/>
            <person name="Adams M.D."/>
            <person name="Hunkapiller M.W."/>
            <person name="Myers E.W."/>
            <person name="Venter J.C."/>
        </authorList>
    </citation>
    <scope>NUCLEOTIDE SEQUENCE [LARGE SCALE GENOMIC DNA]</scope>
</reference>
<reference key="5">
    <citation type="journal article" date="2004" name="Genome Res.">
        <title>The status, quality, and expansion of the NIH full-length cDNA project: the Mammalian Gene Collection (MGC).</title>
        <authorList>
            <consortium name="The MGC Project Team"/>
        </authorList>
    </citation>
    <scope>NUCLEOTIDE SEQUENCE [LARGE SCALE MRNA] (ISOFORM 2)</scope>
</reference>
<reference key="6">
    <citation type="journal article" date="2013" name="J. Proteome Res.">
        <title>Toward a comprehensive characterization of a human cancer cell phosphoproteome.</title>
        <authorList>
            <person name="Zhou H."/>
            <person name="Di Palma S."/>
            <person name="Preisinger C."/>
            <person name="Peng M."/>
            <person name="Polat A.N."/>
            <person name="Heck A.J."/>
            <person name="Mohammed S."/>
        </authorList>
    </citation>
    <scope>PHOSPHORYLATION [LARGE SCALE ANALYSIS] AT SER-577; SER-1343 AND SER-1374</scope>
    <scope>IDENTIFICATION BY MASS SPECTROMETRY [LARGE SCALE ANALYSIS]</scope>
    <source>
        <tissue>Erythroleukemia</tissue>
    </source>
</reference>